<name>DCUP_SULNB</name>
<gene>
    <name evidence="1" type="primary">hemE</name>
    <name type="ordered locus">SUN_1613</name>
</gene>
<organism>
    <name type="scientific">Sulfurovum sp. (strain NBC37-1)</name>
    <dbReference type="NCBI Taxonomy" id="387093"/>
    <lineage>
        <taxon>Bacteria</taxon>
        <taxon>Pseudomonadati</taxon>
        <taxon>Campylobacterota</taxon>
        <taxon>Epsilonproteobacteria</taxon>
        <taxon>Campylobacterales</taxon>
        <taxon>Sulfurovaceae</taxon>
        <taxon>Sulfurovum</taxon>
    </lineage>
</organism>
<keyword id="KW-0963">Cytoplasm</keyword>
<keyword id="KW-0210">Decarboxylase</keyword>
<keyword id="KW-0456">Lyase</keyword>
<keyword id="KW-0627">Porphyrin biosynthesis</keyword>
<dbReference type="EC" id="4.1.1.37" evidence="1"/>
<dbReference type="EMBL" id="AP009179">
    <property type="protein sequence ID" value="BAF72563.1"/>
    <property type="molecule type" value="Genomic_DNA"/>
</dbReference>
<dbReference type="RefSeq" id="WP_012083371.1">
    <property type="nucleotide sequence ID" value="NC_009663.1"/>
</dbReference>
<dbReference type="SMR" id="A6QAQ4"/>
<dbReference type="STRING" id="387093.SUN_1613"/>
<dbReference type="KEGG" id="sun:SUN_1613"/>
<dbReference type="eggNOG" id="COG0407">
    <property type="taxonomic scope" value="Bacteria"/>
</dbReference>
<dbReference type="HOGENOM" id="CLU_040933_0_0_7"/>
<dbReference type="OrthoDB" id="9806656at2"/>
<dbReference type="UniPathway" id="UPA00251">
    <property type="reaction ID" value="UER00321"/>
</dbReference>
<dbReference type="Proteomes" id="UP000006378">
    <property type="component" value="Chromosome"/>
</dbReference>
<dbReference type="GO" id="GO:0005829">
    <property type="term" value="C:cytosol"/>
    <property type="evidence" value="ECO:0007669"/>
    <property type="project" value="TreeGrafter"/>
</dbReference>
<dbReference type="GO" id="GO:0004853">
    <property type="term" value="F:uroporphyrinogen decarboxylase activity"/>
    <property type="evidence" value="ECO:0007669"/>
    <property type="project" value="UniProtKB-UniRule"/>
</dbReference>
<dbReference type="GO" id="GO:0019353">
    <property type="term" value="P:protoporphyrinogen IX biosynthetic process from glutamate"/>
    <property type="evidence" value="ECO:0007669"/>
    <property type="project" value="TreeGrafter"/>
</dbReference>
<dbReference type="CDD" id="cd00717">
    <property type="entry name" value="URO-D"/>
    <property type="match status" value="1"/>
</dbReference>
<dbReference type="FunFam" id="3.20.20.210:FF:000007">
    <property type="entry name" value="Uroporphyrinogen decarboxylase"/>
    <property type="match status" value="1"/>
</dbReference>
<dbReference type="Gene3D" id="3.20.20.210">
    <property type="match status" value="1"/>
</dbReference>
<dbReference type="HAMAP" id="MF_00218">
    <property type="entry name" value="URO_D"/>
    <property type="match status" value="1"/>
</dbReference>
<dbReference type="InterPro" id="IPR038071">
    <property type="entry name" value="UROD/MetE-like_sf"/>
</dbReference>
<dbReference type="InterPro" id="IPR006361">
    <property type="entry name" value="Uroporphyrinogen_deCO2ase_HemE"/>
</dbReference>
<dbReference type="InterPro" id="IPR000257">
    <property type="entry name" value="Uroporphyrinogen_deCOase"/>
</dbReference>
<dbReference type="NCBIfam" id="TIGR01464">
    <property type="entry name" value="hemE"/>
    <property type="match status" value="1"/>
</dbReference>
<dbReference type="PANTHER" id="PTHR21091">
    <property type="entry name" value="METHYLTETRAHYDROFOLATE:HOMOCYSTEINE METHYLTRANSFERASE RELATED"/>
    <property type="match status" value="1"/>
</dbReference>
<dbReference type="PANTHER" id="PTHR21091:SF169">
    <property type="entry name" value="UROPORPHYRINOGEN DECARBOXYLASE"/>
    <property type="match status" value="1"/>
</dbReference>
<dbReference type="Pfam" id="PF01208">
    <property type="entry name" value="URO-D"/>
    <property type="match status" value="1"/>
</dbReference>
<dbReference type="SUPFAM" id="SSF51726">
    <property type="entry name" value="UROD/MetE-like"/>
    <property type="match status" value="1"/>
</dbReference>
<dbReference type="PROSITE" id="PS00906">
    <property type="entry name" value="UROD_1"/>
    <property type="match status" value="1"/>
</dbReference>
<dbReference type="PROSITE" id="PS00907">
    <property type="entry name" value="UROD_2"/>
    <property type="match status" value="1"/>
</dbReference>
<proteinExistence type="inferred from homology"/>
<feature type="chain" id="PRO_0000325700" description="Uroporphyrinogen decarboxylase">
    <location>
        <begin position="1"/>
        <end position="346"/>
    </location>
</feature>
<feature type="binding site" evidence="1">
    <location>
        <begin position="23"/>
        <end position="27"/>
    </location>
    <ligand>
        <name>substrate</name>
    </ligand>
</feature>
<feature type="binding site" evidence="1">
    <location>
        <position position="73"/>
    </location>
    <ligand>
        <name>substrate</name>
    </ligand>
</feature>
<feature type="binding site" evidence="1">
    <location>
        <position position="151"/>
    </location>
    <ligand>
        <name>substrate</name>
    </ligand>
</feature>
<feature type="binding site" evidence="1">
    <location>
        <position position="206"/>
    </location>
    <ligand>
        <name>substrate</name>
    </ligand>
</feature>
<feature type="binding site" evidence="1">
    <location>
        <position position="321"/>
    </location>
    <ligand>
        <name>substrate</name>
    </ligand>
</feature>
<feature type="site" description="Transition state stabilizer" evidence="1">
    <location>
        <position position="73"/>
    </location>
</feature>
<sequence>MSKIFVDACLGKETPYTPVWMMRQAGRYLPEYMKVRAEAGNFLNLCHDPEKACEVTLQPVDIVGVDAAILFSDILVIPDEMGMDLSFVKGEGPKFSDPIKTQADVDRLIGGEEAAGKLTYVYDTIKLIKERLAEDKALIGFTGAPWTLATYMIEGQGTKTYNICKKMMYSDPELLHNILAKVTEVVKYYMEKQIEAGIDVVQIFDSWASAIEPGKYDEFSWKYMVEIADYLKSKYPDTPIIMFPKGIPAFIERGLVYGNFDVFGVDWGTPMALAKEKLGDQYVLQGNMEPCRLYSKEATTECVEAIQKVMGGKRHIFNLGHGILPDVPVENAKHFVNECHRVSGKK</sequence>
<evidence type="ECO:0000255" key="1">
    <source>
        <dbReference type="HAMAP-Rule" id="MF_00218"/>
    </source>
</evidence>
<protein>
    <recommendedName>
        <fullName evidence="1">Uroporphyrinogen decarboxylase</fullName>
        <shortName evidence="1">UPD</shortName>
        <shortName evidence="1">URO-D</shortName>
        <ecNumber evidence="1">4.1.1.37</ecNumber>
    </recommendedName>
</protein>
<comment type="function">
    <text evidence="1">Catalyzes the decarboxylation of four acetate groups of uroporphyrinogen-III to yield coproporphyrinogen-III.</text>
</comment>
<comment type="catalytic activity">
    <reaction evidence="1">
        <text>uroporphyrinogen III + 4 H(+) = coproporphyrinogen III + 4 CO2</text>
        <dbReference type="Rhea" id="RHEA:19865"/>
        <dbReference type="ChEBI" id="CHEBI:15378"/>
        <dbReference type="ChEBI" id="CHEBI:16526"/>
        <dbReference type="ChEBI" id="CHEBI:57308"/>
        <dbReference type="ChEBI" id="CHEBI:57309"/>
        <dbReference type="EC" id="4.1.1.37"/>
    </reaction>
</comment>
<comment type="pathway">
    <text evidence="1">Porphyrin-containing compound metabolism; protoporphyrin-IX biosynthesis; coproporphyrinogen-III from 5-aminolevulinate: step 4/4.</text>
</comment>
<comment type="subunit">
    <text evidence="1">Homodimer.</text>
</comment>
<comment type="subcellular location">
    <subcellularLocation>
        <location evidence="1">Cytoplasm</location>
    </subcellularLocation>
</comment>
<comment type="similarity">
    <text evidence="1">Belongs to the uroporphyrinogen decarboxylase family.</text>
</comment>
<accession>A6QAQ4</accession>
<reference key="1">
    <citation type="journal article" date="2007" name="Proc. Natl. Acad. Sci. U.S.A.">
        <title>Deep-sea vent epsilon-proteobacterial genomes provide insights into emergence of pathogens.</title>
        <authorList>
            <person name="Nakagawa S."/>
            <person name="Takaki Y."/>
            <person name="Shimamura S."/>
            <person name="Reysenbach A.-L."/>
            <person name="Takai K."/>
            <person name="Horikoshi K."/>
        </authorList>
    </citation>
    <scope>NUCLEOTIDE SEQUENCE [LARGE SCALE GENOMIC DNA]</scope>
    <source>
        <strain>NBC37-1</strain>
    </source>
</reference>